<feature type="signal peptide" evidence="1">
    <location>
        <begin position="1"/>
        <end position="19"/>
    </location>
</feature>
<feature type="chain" id="PRO_0000448638" description="U21-hexatoxin-Hi1a" evidence="5">
    <location>
        <begin position="20"/>
        <end position="92"/>
    </location>
</feature>
<feature type="disulfide bond" evidence="2 7">
    <location>
        <begin position="41"/>
        <end position="55"/>
    </location>
</feature>
<feature type="disulfide bond" evidence="2 7">
    <location>
        <begin position="48"/>
        <end position="67"/>
    </location>
</feature>
<feature type="disulfide bond" evidence="2 7">
    <location>
        <begin position="54"/>
        <end position="82"/>
    </location>
</feature>
<feature type="disulfide bond" evidence="2 7">
    <location>
        <begin position="85"/>
        <end position="92"/>
    </location>
</feature>
<feature type="helix" evidence="8">
    <location>
        <begin position="21"/>
        <end position="24"/>
    </location>
</feature>
<feature type="strand" evidence="8">
    <location>
        <begin position="38"/>
        <end position="40"/>
    </location>
</feature>
<feature type="helix" evidence="8">
    <location>
        <begin position="51"/>
        <end position="53"/>
    </location>
</feature>
<feature type="turn" evidence="8">
    <location>
        <begin position="58"/>
        <end position="62"/>
    </location>
</feature>
<feature type="strand" evidence="8">
    <location>
        <begin position="63"/>
        <end position="70"/>
    </location>
</feature>
<feature type="turn" evidence="8">
    <location>
        <begin position="73"/>
        <end position="76"/>
    </location>
</feature>
<feature type="strand" evidence="8">
    <location>
        <begin position="79"/>
        <end position="88"/>
    </location>
</feature>
<dbReference type="PDB" id="6BA3">
    <property type="method" value="NMR"/>
    <property type="chains" value="A=19-92"/>
</dbReference>
<dbReference type="PDBsum" id="6BA3"/>
<dbReference type="BMRB" id="A0A452CSQ9"/>
<dbReference type="SMR" id="A0A452CSQ9"/>
<dbReference type="GO" id="GO:0005576">
    <property type="term" value="C:extracellular region"/>
    <property type="evidence" value="ECO:0007669"/>
    <property type="project" value="UniProtKB-SubCell"/>
</dbReference>
<dbReference type="GO" id="GO:0099106">
    <property type="term" value="F:ion channel regulator activity"/>
    <property type="evidence" value="ECO:0007669"/>
    <property type="project" value="UniProtKB-KW"/>
</dbReference>
<dbReference type="GO" id="GO:0090729">
    <property type="term" value="F:toxin activity"/>
    <property type="evidence" value="ECO:0007669"/>
    <property type="project" value="UniProtKB-KW"/>
</dbReference>
<dbReference type="InterPro" id="IPR035311">
    <property type="entry name" value="Cys_Knot_tox"/>
</dbReference>
<dbReference type="Pfam" id="PF17486">
    <property type="entry name" value="Cys_Knot_tox"/>
    <property type="match status" value="1"/>
</dbReference>
<reference key="1">
    <citation type="journal article" date="2020" name="Proc. Natl. Acad. Sci. U.S.A.">
        <title>Structural venomics reveals evolution of a complex venom by duplication and diversification of an ancient peptide-encoding gene.</title>
        <authorList>
            <person name="Pineda S.S."/>
            <person name="Chin Y.K."/>
            <person name="Undheim E.A.B."/>
            <person name="Senff S."/>
            <person name="Mobli M."/>
            <person name="Dauly C."/>
            <person name="Escoubas P."/>
            <person name="Nicholson G.M."/>
            <person name="Kaas Q."/>
            <person name="Guo S."/>
            <person name="Herzig V."/>
            <person name="Mattick J.S."/>
            <person name="King G.F."/>
        </authorList>
    </citation>
    <scope>NUCLEOTIDE SEQUENCE [MRNA]</scope>
    <scope>STRUCTURE BY NMR OF 20-92</scope>
    <scope>DISULFIDE BONDS</scope>
    <scope>FUNCTION</scope>
    <scope>BIOASSAY</scope>
    <scope>IDENTIFICATION BY MASS SPECTROMETRY</scope>
    <scope>SUBCELLULAR LOCATION</scope>
    <scope>RECOMBINANT EXPRESSION</scope>
    <source>
        <tissue>Venom gland</tissue>
    </source>
</reference>
<accession>A0A452CSQ9</accession>
<organism>
    <name type="scientific">Hadronyche infensa</name>
    <name type="common">Fraser island funnel-web spider</name>
    <name type="synonym">Atrax infensus</name>
    <dbReference type="NCBI Taxonomy" id="153481"/>
    <lineage>
        <taxon>Eukaryota</taxon>
        <taxon>Metazoa</taxon>
        <taxon>Ecdysozoa</taxon>
        <taxon>Arthropoda</taxon>
        <taxon>Chelicerata</taxon>
        <taxon>Arachnida</taxon>
        <taxon>Araneae</taxon>
        <taxon>Mygalomorphae</taxon>
        <taxon>Hexathelidae</taxon>
        <taxon>Hadronyche</taxon>
    </lineage>
</organism>
<evidence type="ECO:0000255" key="1"/>
<evidence type="ECO:0000269" key="2">
    <source>
    </source>
</evidence>
<evidence type="ECO:0000303" key="3">
    <source>
    </source>
</evidence>
<evidence type="ECO:0000305" key="4"/>
<evidence type="ECO:0000305" key="5">
    <source>
    </source>
</evidence>
<evidence type="ECO:0000312" key="6">
    <source>
        <dbReference type="PDB" id="6BA3"/>
    </source>
</evidence>
<evidence type="ECO:0007744" key="7">
    <source>
        <dbReference type="PDB" id="6BA3"/>
    </source>
</evidence>
<evidence type="ECO:0007829" key="8">
    <source>
        <dbReference type="PDB" id="6BA3"/>
    </source>
</evidence>
<sequence length="92" mass="10121">MKTILSMLIFVALFAAIVGNRWNLGYGIPHKQVKLPNGQLCKEPGDSCSKRDECCKADDQKTYSSGCAQTWSAMEGGFVRECYICAVESSMC</sequence>
<protein>
    <recommendedName>
        <fullName evidence="6">U21-hexatoxin-Hi1a</fullName>
        <shortName evidence="4">U21-HXTX-Hi1a</shortName>
    </recommendedName>
    <alternativeName>
        <fullName evidence="3">SF26 peptide</fullName>
    </alternativeName>
</protein>
<name>TL1A_HADIN</name>
<comment type="function">
    <text evidence="2">Potent insecticidal toxin with probable ion channel impairing activity. In vivo, reversibly paralyzes all flies within 30 minutes, even at low dose (0.3 nmol/g).</text>
</comment>
<comment type="subcellular location">
    <subcellularLocation>
        <location evidence="2">Secreted</location>
    </subcellularLocation>
</comment>
<comment type="tissue specificity">
    <text evidence="5">Expressed by the venom gland.</text>
</comment>
<comment type="domain">
    <text evidence="4">The presence of a 'disulfide through disulfide knot' structurally defines this protein as a knottin.</text>
</comment>
<comment type="similarity">
    <text evidence="4">Belongs to the neurotoxin 21 family.</text>
</comment>
<proteinExistence type="evidence at protein level"/>
<keyword id="KW-0002">3D-structure</keyword>
<keyword id="KW-1015">Disulfide bond</keyword>
<keyword id="KW-0872">Ion channel impairing toxin</keyword>
<keyword id="KW-0960">Knottin</keyword>
<keyword id="KW-0528">Neurotoxin</keyword>
<keyword id="KW-0964">Secreted</keyword>
<keyword id="KW-0732">Signal</keyword>
<keyword id="KW-0800">Toxin</keyword>